<comment type="function">
    <text evidence="1">Essential for recycling GMP and indirectly, cGMP.</text>
</comment>
<comment type="catalytic activity">
    <reaction>
        <text>GMP + ATP = GDP + ADP</text>
        <dbReference type="Rhea" id="RHEA:20780"/>
        <dbReference type="ChEBI" id="CHEBI:30616"/>
        <dbReference type="ChEBI" id="CHEBI:58115"/>
        <dbReference type="ChEBI" id="CHEBI:58189"/>
        <dbReference type="ChEBI" id="CHEBI:456216"/>
        <dbReference type="EC" id="2.7.4.8"/>
    </reaction>
</comment>
<comment type="subcellular location">
    <subcellularLocation>
        <location evidence="1">Cytoplasm</location>
    </subcellularLocation>
</comment>
<comment type="similarity">
    <text evidence="2">Belongs to the guanylate kinase family.</text>
</comment>
<comment type="sequence caution" evidence="2">
    <conflict type="erroneous initiation">
        <sequence resource="EMBL-CDS" id="CAA74271"/>
    </conflict>
</comment>
<protein>
    <recommendedName>
        <fullName>Guanylate kinase</fullName>
        <ecNumber>2.7.4.8</ecNumber>
    </recommendedName>
    <alternativeName>
        <fullName>GMP kinase</fullName>
    </alternativeName>
</protein>
<gene>
    <name type="primary">gmk</name>
    <name type="synonym">yloD</name>
    <name type="ordered locus">BSU15680</name>
</gene>
<proteinExistence type="inferred from homology"/>
<reference key="1">
    <citation type="journal article" date="1998" name="Microbiology">
        <title>A 28 kbp segment from the spoVM region of the Bacillus subtilis 168 genome.</title>
        <authorList>
            <person name="Foulger D."/>
            <person name="Errington J."/>
        </authorList>
    </citation>
    <scope>NUCLEOTIDE SEQUENCE [GENOMIC DNA]</scope>
    <source>
        <strain>168</strain>
    </source>
</reference>
<reference key="2">
    <citation type="journal article" date="1997" name="Nature">
        <title>The complete genome sequence of the Gram-positive bacterium Bacillus subtilis.</title>
        <authorList>
            <person name="Kunst F."/>
            <person name="Ogasawara N."/>
            <person name="Moszer I."/>
            <person name="Albertini A.M."/>
            <person name="Alloni G."/>
            <person name="Azevedo V."/>
            <person name="Bertero M.G."/>
            <person name="Bessieres P."/>
            <person name="Bolotin A."/>
            <person name="Borchert S."/>
            <person name="Borriss R."/>
            <person name="Boursier L."/>
            <person name="Brans A."/>
            <person name="Braun M."/>
            <person name="Brignell S.C."/>
            <person name="Bron S."/>
            <person name="Brouillet S."/>
            <person name="Bruschi C.V."/>
            <person name="Caldwell B."/>
            <person name="Capuano V."/>
            <person name="Carter N.M."/>
            <person name="Choi S.-K."/>
            <person name="Codani J.-J."/>
            <person name="Connerton I.F."/>
            <person name="Cummings N.J."/>
            <person name="Daniel R.A."/>
            <person name="Denizot F."/>
            <person name="Devine K.M."/>
            <person name="Duesterhoeft A."/>
            <person name="Ehrlich S.D."/>
            <person name="Emmerson P.T."/>
            <person name="Entian K.-D."/>
            <person name="Errington J."/>
            <person name="Fabret C."/>
            <person name="Ferrari E."/>
            <person name="Foulger D."/>
            <person name="Fritz C."/>
            <person name="Fujita M."/>
            <person name="Fujita Y."/>
            <person name="Fuma S."/>
            <person name="Galizzi A."/>
            <person name="Galleron N."/>
            <person name="Ghim S.-Y."/>
            <person name="Glaser P."/>
            <person name="Goffeau A."/>
            <person name="Golightly E.J."/>
            <person name="Grandi G."/>
            <person name="Guiseppi G."/>
            <person name="Guy B.J."/>
            <person name="Haga K."/>
            <person name="Haiech J."/>
            <person name="Harwood C.R."/>
            <person name="Henaut A."/>
            <person name="Hilbert H."/>
            <person name="Holsappel S."/>
            <person name="Hosono S."/>
            <person name="Hullo M.-F."/>
            <person name="Itaya M."/>
            <person name="Jones L.-M."/>
            <person name="Joris B."/>
            <person name="Karamata D."/>
            <person name="Kasahara Y."/>
            <person name="Klaerr-Blanchard M."/>
            <person name="Klein C."/>
            <person name="Kobayashi Y."/>
            <person name="Koetter P."/>
            <person name="Koningstein G."/>
            <person name="Krogh S."/>
            <person name="Kumano M."/>
            <person name="Kurita K."/>
            <person name="Lapidus A."/>
            <person name="Lardinois S."/>
            <person name="Lauber J."/>
            <person name="Lazarevic V."/>
            <person name="Lee S.-M."/>
            <person name="Levine A."/>
            <person name="Liu H."/>
            <person name="Masuda S."/>
            <person name="Mauel C."/>
            <person name="Medigue C."/>
            <person name="Medina N."/>
            <person name="Mellado R.P."/>
            <person name="Mizuno M."/>
            <person name="Moestl D."/>
            <person name="Nakai S."/>
            <person name="Noback M."/>
            <person name="Noone D."/>
            <person name="O'Reilly M."/>
            <person name="Ogawa K."/>
            <person name="Ogiwara A."/>
            <person name="Oudega B."/>
            <person name="Park S.-H."/>
            <person name="Parro V."/>
            <person name="Pohl T.M."/>
            <person name="Portetelle D."/>
            <person name="Porwollik S."/>
            <person name="Prescott A.M."/>
            <person name="Presecan E."/>
            <person name="Pujic P."/>
            <person name="Purnelle B."/>
            <person name="Rapoport G."/>
            <person name="Rey M."/>
            <person name="Reynolds S."/>
            <person name="Rieger M."/>
            <person name="Rivolta C."/>
            <person name="Rocha E."/>
            <person name="Roche B."/>
            <person name="Rose M."/>
            <person name="Sadaie Y."/>
            <person name="Sato T."/>
            <person name="Scanlan E."/>
            <person name="Schleich S."/>
            <person name="Schroeter R."/>
            <person name="Scoffone F."/>
            <person name="Sekiguchi J."/>
            <person name="Sekowska A."/>
            <person name="Seror S.J."/>
            <person name="Serror P."/>
            <person name="Shin B.-S."/>
            <person name="Soldo B."/>
            <person name="Sorokin A."/>
            <person name="Tacconi E."/>
            <person name="Takagi T."/>
            <person name="Takahashi H."/>
            <person name="Takemaru K."/>
            <person name="Takeuchi M."/>
            <person name="Tamakoshi A."/>
            <person name="Tanaka T."/>
            <person name="Terpstra P."/>
            <person name="Tognoni A."/>
            <person name="Tosato V."/>
            <person name="Uchiyama S."/>
            <person name="Vandenbol M."/>
            <person name="Vannier F."/>
            <person name="Vassarotti A."/>
            <person name="Viari A."/>
            <person name="Wambutt R."/>
            <person name="Wedler E."/>
            <person name="Wedler H."/>
            <person name="Weitzenegger T."/>
            <person name="Winters P."/>
            <person name="Wipat A."/>
            <person name="Yamamoto H."/>
            <person name="Yamane K."/>
            <person name="Yasumoto K."/>
            <person name="Yata K."/>
            <person name="Yoshida K."/>
            <person name="Yoshikawa H.-F."/>
            <person name="Zumstein E."/>
            <person name="Yoshikawa H."/>
            <person name="Danchin A."/>
        </authorList>
    </citation>
    <scope>NUCLEOTIDE SEQUENCE [LARGE SCALE GENOMIC DNA]</scope>
    <source>
        <strain>168</strain>
    </source>
</reference>
<organism>
    <name type="scientific">Bacillus subtilis (strain 168)</name>
    <dbReference type="NCBI Taxonomy" id="224308"/>
    <lineage>
        <taxon>Bacteria</taxon>
        <taxon>Bacillati</taxon>
        <taxon>Bacillota</taxon>
        <taxon>Bacilli</taxon>
        <taxon>Bacillales</taxon>
        <taxon>Bacillaceae</taxon>
        <taxon>Bacillus</taxon>
    </lineage>
</organism>
<accession>O34328</accession>
<feature type="chain" id="PRO_0000170498" description="Guanylate kinase">
    <location>
        <begin position="1"/>
        <end position="204"/>
    </location>
</feature>
<feature type="domain" description="Guanylate kinase-like">
    <location>
        <begin position="5"/>
        <end position="184"/>
    </location>
</feature>
<feature type="binding site" evidence="1">
    <location>
        <begin position="12"/>
        <end position="19"/>
    </location>
    <ligand>
        <name>ATP</name>
        <dbReference type="ChEBI" id="CHEBI:30616"/>
    </ligand>
</feature>
<dbReference type="EC" id="2.7.4.8"/>
<dbReference type="EMBL" id="Y13937">
    <property type="protein sequence ID" value="CAA74271.1"/>
    <property type="status" value="ALT_INIT"/>
    <property type="molecule type" value="Genomic_DNA"/>
</dbReference>
<dbReference type="EMBL" id="AL009126">
    <property type="protein sequence ID" value="CAB13441.2"/>
    <property type="molecule type" value="Genomic_DNA"/>
</dbReference>
<dbReference type="PIR" id="B69878">
    <property type="entry name" value="B69878"/>
</dbReference>
<dbReference type="RefSeq" id="NP_389450.2">
    <property type="nucleotide sequence ID" value="NC_000964.3"/>
</dbReference>
<dbReference type="RefSeq" id="WP_003232083.1">
    <property type="nucleotide sequence ID" value="NZ_OZ025638.1"/>
</dbReference>
<dbReference type="SMR" id="O34328"/>
<dbReference type="FunCoup" id="O34328">
    <property type="interactions" value="627"/>
</dbReference>
<dbReference type="STRING" id="224308.BSU15680"/>
<dbReference type="jPOST" id="O34328"/>
<dbReference type="PaxDb" id="224308-BSU15680"/>
<dbReference type="EnsemblBacteria" id="CAB13441">
    <property type="protein sequence ID" value="CAB13441"/>
    <property type="gene ID" value="BSU_15680"/>
</dbReference>
<dbReference type="GeneID" id="86873923"/>
<dbReference type="GeneID" id="938821"/>
<dbReference type="KEGG" id="bsu:BSU15680"/>
<dbReference type="PATRIC" id="fig|224308.179.peg.1708"/>
<dbReference type="eggNOG" id="COG0194">
    <property type="taxonomic scope" value="Bacteria"/>
</dbReference>
<dbReference type="InParanoid" id="O34328"/>
<dbReference type="OrthoDB" id="9808150at2"/>
<dbReference type="PhylomeDB" id="O34328"/>
<dbReference type="BioCyc" id="BSUB:BSU15680-MONOMER"/>
<dbReference type="Proteomes" id="UP000001570">
    <property type="component" value="Chromosome"/>
</dbReference>
<dbReference type="GO" id="GO:0005829">
    <property type="term" value="C:cytosol"/>
    <property type="evidence" value="ECO:0000318"/>
    <property type="project" value="GO_Central"/>
</dbReference>
<dbReference type="GO" id="GO:0005524">
    <property type="term" value="F:ATP binding"/>
    <property type="evidence" value="ECO:0007669"/>
    <property type="project" value="UniProtKB-UniRule"/>
</dbReference>
<dbReference type="GO" id="GO:0004385">
    <property type="term" value="F:guanylate kinase activity"/>
    <property type="evidence" value="ECO:0000318"/>
    <property type="project" value="GO_Central"/>
</dbReference>
<dbReference type="CDD" id="cd00071">
    <property type="entry name" value="GMPK"/>
    <property type="match status" value="1"/>
</dbReference>
<dbReference type="FunFam" id="3.40.50.300:FF:000855">
    <property type="entry name" value="Guanylate kinase"/>
    <property type="match status" value="1"/>
</dbReference>
<dbReference type="FunFam" id="3.30.63.10:FF:000002">
    <property type="entry name" value="Guanylate kinase 1"/>
    <property type="match status" value="1"/>
</dbReference>
<dbReference type="Gene3D" id="3.30.63.10">
    <property type="entry name" value="Guanylate Kinase phosphate binding domain"/>
    <property type="match status" value="1"/>
</dbReference>
<dbReference type="Gene3D" id="3.40.50.300">
    <property type="entry name" value="P-loop containing nucleotide triphosphate hydrolases"/>
    <property type="match status" value="1"/>
</dbReference>
<dbReference type="HAMAP" id="MF_00328">
    <property type="entry name" value="Guanylate_kinase"/>
    <property type="match status" value="1"/>
</dbReference>
<dbReference type="InterPro" id="IPR008145">
    <property type="entry name" value="GK/Ca_channel_bsu"/>
</dbReference>
<dbReference type="InterPro" id="IPR008144">
    <property type="entry name" value="Guanylate_kin-like_dom"/>
</dbReference>
<dbReference type="InterPro" id="IPR017665">
    <property type="entry name" value="Guanylate_kinase"/>
</dbReference>
<dbReference type="InterPro" id="IPR020590">
    <property type="entry name" value="Guanylate_kinase_CS"/>
</dbReference>
<dbReference type="InterPro" id="IPR027417">
    <property type="entry name" value="P-loop_NTPase"/>
</dbReference>
<dbReference type="NCBIfam" id="TIGR03263">
    <property type="entry name" value="guanyl_kin"/>
    <property type="match status" value="1"/>
</dbReference>
<dbReference type="PANTHER" id="PTHR23117:SF13">
    <property type="entry name" value="GUANYLATE KINASE"/>
    <property type="match status" value="1"/>
</dbReference>
<dbReference type="PANTHER" id="PTHR23117">
    <property type="entry name" value="GUANYLATE KINASE-RELATED"/>
    <property type="match status" value="1"/>
</dbReference>
<dbReference type="Pfam" id="PF00625">
    <property type="entry name" value="Guanylate_kin"/>
    <property type="match status" value="1"/>
</dbReference>
<dbReference type="SMART" id="SM00072">
    <property type="entry name" value="GuKc"/>
    <property type="match status" value="1"/>
</dbReference>
<dbReference type="SUPFAM" id="SSF52540">
    <property type="entry name" value="P-loop containing nucleoside triphosphate hydrolases"/>
    <property type="match status" value="1"/>
</dbReference>
<dbReference type="PROSITE" id="PS00856">
    <property type="entry name" value="GUANYLATE_KINASE_1"/>
    <property type="match status" value="1"/>
</dbReference>
<dbReference type="PROSITE" id="PS50052">
    <property type="entry name" value="GUANYLATE_KINASE_2"/>
    <property type="match status" value="1"/>
</dbReference>
<name>KGUA_BACSU</name>
<evidence type="ECO:0000250" key="1"/>
<evidence type="ECO:0000305" key="2"/>
<keyword id="KW-0067">ATP-binding</keyword>
<keyword id="KW-0963">Cytoplasm</keyword>
<keyword id="KW-0418">Kinase</keyword>
<keyword id="KW-0547">Nucleotide-binding</keyword>
<keyword id="KW-1185">Reference proteome</keyword>
<keyword id="KW-0808">Transferase</keyword>
<sequence length="204" mass="23218">MKERGLLIVLSGPSGVGKGTVRQAIFSQEDTKFEYSISVTTRSPREGEVNGVDYFFKTRDEFEQMIADNKLLEWAEYVGNYYGTPVDYVEQTLQDGKDVFLEIEVQGALQVRNAFPEGLFIFLAPPSLSELKNRIVTRGTETDALIENRMKAAKAEIEMMDAYDYVVENDNVETACDKIKAIVLAEHLKRERVAPRYKKMLEVE</sequence>